<organism>
    <name type="scientific">Escherichia fergusonii (strain ATCC 35469 / DSM 13698 / CCUG 18766 / IAM 14443 / JCM 21226 / LMG 7866 / NBRC 102419 / NCTC 12128 / CDC 0568-73)</name>
    <dbReference type="NCBI Taxonomy" id="585054"/>
    <lineage>
        <taxon>Bacteria</taxon>
        <taxon>Pseudomonadati</taxon>
        <taxon>Pseudomonadota</taxon>
        <taxon>Gammaproteobacteria</taxon>
        <taxon>Enterobacterales</taxon>
        <taxon>Enterobacteriaceae</taxon>
        <taxon>Escherichia</taxon>
    </lineage>
</organism>
<evidence type="ECO:0000255" key="1">
    <source>
        <dbReference type="HAMAP-Rule" id="MF_00302"/>
    </source>
</evidence>
<proteinExistence type="inferred from homology"/>
<feature type="chain" id="PRO_1000119503" description="ATP-dependent Clp protease adapter protein ClpS">
    <location>
        <begin position="1"/>
        <end position="106"/>
    </location>
</feature>
<gene>
    <name evidence="1" type="primary">clpS</name>
    <name type="ordered locus">EFER_1029</name>
</gene>
<accession>B7LN49</accession>
<reference key="1">
    <citation type="journal article" date="2009" name="PLoS Genet.">
        <title>Organised genome dynamics in the Escherichia coli species results in highly diverse adaptive paths.</title>
        <authorList>
            <person name="Touchon M."/>
            <person name="Hoede C."/>
            <person name="Tenaillon O."/>
            <person name="Barbe V."/>
            <person name="Baeriswyl S."/>
            <person name="Bidet P."/>
            <person name="Bingen E."/>
            <person name="Bonacorsi S."/>
            <person name="Bouchier C."/>
            <person name="Bouvet O."/>
            <person name="Calteau A."/>
            <person name="Chiapello H."/>
            <person name="Clermont O."/>
            <person name="Cruveiller S."/>
            <person name="Danchin A."/>
            <person name="Diard M."/>
            <person name="Dossat C."/>
            <person name="Karoui M.E."/>
            <person name="Frapy E."/>
            <person name="Garry L."/>
            <person name="Ghigo J.M."/>
            <person name="Gilles A.M."/>
            <person name="Johnson J."/>
            <person name="Le Bouguenec C."/>
            <person name="Lescat M."/>
            <person name="Mangenot S."/>
            <person name="Martinez-Jehanne V."/>
            <person name="Matic I."/>
            <person name="Nassif X."/>
            <person name="Oztas S."/>
            <person name="Petit M.A."/>
            <person name="Pichon C."/>
            <person name="Rouy Z."/>
            <person name="Ruf C.S."/>
            <person name="Schneider D."/>
            <person name="Tourret J."/>
            <person name="Vacherie B."/>
            <person name="Vallenet D."/>
            <person name="Medigue C."/>
            <person name="Rocha E.P.C."/>
            <person name="Denamur E."/>
        </authorList>
    </citation>
    <scope>NUCLEOTIDE SEQUENCE [LARGE SCALE GENOMIC DNA]</scope>
    <source>
        <strain>ATCC 35469 / DSM 13698 / BCRC 15582 / CCUG 18766 / IAM 14443 / JCM 21226 / LMG 7866 / NBRC 102419 / NCTC 12128 / CDC 0568-73</strain>
    </source>
</reference>
<name>CLPS_ESCF3</name>
<dbReference type="EMBL" id="CU928158">
    <property type="protein sequence ID" value="CAQ88560.1"/>
    <property type="molecule type" value="Genomic_DNA"/>
</dbReference>
<dbReference type="RefSeq" id="WP_000047741.1">
    <property type="nucleotide sequence ID" value="NC_011740.1"/>
</dbReference>
<dbReference type="SMR" id="B7LN49"/>
<dbReference type="GeneID" id="75057919"/>
<dbReference type="KEGG" id="efe:EFER_1029"/>
<dbReference type="HOGENOM" id="CLU_134358_2_1_6"/>
<dbReference type="OrthoDB" id="9796121at2"/>
<dbReference type="Proteomes" id="UP000000745">
    <property type="component" value="Chromosome"/>
</dbReference>
<dbReference type="GO" id="GO:0030163">
    <property type="term" value="P:protein catabolic process"/>
    <property type="evidence" value="ECO:0007669"/>
    <property type="project" value="InterPro"/>
</dbReference>
<dbReference type="GO" id="GO:0006508">
    <property type="term" value="P:proteolysis"/>
    <property type="evidence" value="ECO:0007669"/>
    <property type="project" value="UniProtKB-UniRule"/>
</dbReference>
<dbReference type="FunFam" id="3.30.1390.10:FF:000002">
    <property type="entry name" value="ATP-dependent Clp protease adapter protein ClpS"/>
    <property type="match status" value="1"/>
</dbReference>
<dbReference type="Gene3D" id="3.30.1390.10">
    <property type="match status" value="1"/>
</dbReference>
<dbReference type="HAMAP" id="MF_00302">
    <property type="entry name" value="ClpS"/>
    <property type="match status" value="1"/>
</dbReference>
<dbReference type="InterPro" id="IPR022935">
    <property type="entry name" value="ClpS"/>
</dbReference>
<dbReference type="InterPro" id="IPR003769">
    <property type="entry name" value="ClpS_core"/>
</dbReference>
<dbReference type="InterPro" id="IPR014719">
    <property type="entry name" value="Ribosomal_bL12_C/ClpS-like"/>
</dbReference>
<dbReference type="NCBIfam" id="NF000670">
    <property type="entry name" value="PRK00033.1-3"/>
    <property type="match status" value="1"/>
</dbReference>
<dbReference type="NCBIfam" id="NF000672">
    <property type="entry name" value="PRK00033.1-5"/>
    <property type="match status" value="1"/>
</dbReference>
<dbReference type="PANTHER" id="PTHR33473:SF19">
    <property type="entry name" value="ATP-DEPENDENT CLP PROTEASE ADAPTER PROTEIN CLPS"/>
    <property type="match status" value="1"/>
</dbReference>
<dbReference type="PANTHER" id="PTHR33473">
    <property type="entry name" value="ATP-DEPENDENT CLP PROTEASE ADAPTER PROTEIN CLPS1, CHLOROPLASTIC"/>
    <property type="match status" value="1"/>
</dbReference>
<dbReference type="Pfam" id="PF02617">
    <property type="entry name" value="ClpS"/>
    <property type="match status" value="1"/>
</dbReference>
<dbReference type="SUPFAM" id="SSF54736">
    <property type="entry name" value="ClpS-like"/>
    <property type="match status" value="1"/>
</dbReference>
<protein>
    <recommendedName>
        <fullName evidence="1">ATP-dependent Clp protease adapter protein ClpS</fullName>
    </recommendedName>
</protein>
<sequence>MSKTNDWLDFDQLAEDKVRDALKPPSMYKVILVNDDYTPMEFVIDVLQKFFSYDVERATQLMLTVHYQGKAICGVFTAEVAETKVAMVNNYARENEHPLLCTLEKA</sequence>
<comment type="function">
    <text evidence="1">Involved in the modulation of the specificity of the ClpAP-mediated ATP-dependent protein degradation.</text>
</comment>
<comment type="subunit">
    <text evidence="1">Binds to the N-terminal domain of the chaperone ClpA.</text>
</comment>
<comment type="similarity">
    <text evidence="1">Belongs to the ClpS family.</text>
</comment>